<dbReference type="EMBL" id="L77117">
    <property type="protein sequence ID" value="AAB98915.1"/>
    <property type="molecule type" value="Genomic_DNA"/>
</dbReference>
<dbReference type="PIR" id="A64413">
    <property type="entry name" value="A64413"/>
</dbReference>
<dbReference type="RefSeq" id="WP_010870419.1">
    <property type="nucleotide sequence ID" value="NC_000909.1"/>
</dbReference>
<dbReference type="SMR" id="Q58315"/>
<dbReference type="STRING" id="243232.MJ_0905"/>
<dbReference type="PaxDb" id="243232-MJ_0905"/>
<dbReference type="EnsemblBacteria" id="AAB98915">
    <property type="protein sequence ID" value="AAB98915"/>
    <property type="gene ID" value="MJ_0905"/>
</dbReference>
<dbReference type="GeneID" id="1451794"/>
<dbReference type="KEGG" id="mja:MJ_0905"/>
<dbReference type="eggNOG" id="arCOG03422">
    <property type="taxonomic scope" value="Archaea"/>
</dbReference>
<dbReference type="HOGENOM" id="CLU_174518_0_0_2"/>
<dbReference type="InParanoid" id="Q58315"/>
<dbReference type="OrthoDB" id="55560at2157"/>
<dbReference type="PhylomeDB" id="Q58315"/>
<dbReference type="Proteomes" id="UP000000805">
    <property type="component" value="Chromosome"/>
</dbReference>
<dbReference type="CDD" id="cd00090">
    <property type="entry name" value="HTH_ARSR"/>
    <property type="match status" value="1"/>
</dbReference>
<dbReference type="Gene3D" id="1.10.10.10">
    <property type="entry name" value="Winged helix-like DNA-binding domain superfamily/Winged helix DNA-binding domain"/>
    <property type="match status" value="1"/>
</dbReference>
<dbReference type="InterPro" id="IPR011991">
    <property type="entry name" value="ArsR-like_HTH"/>
</dbReference>
<dbReference type="InterPro" id="IPR010863">
    <property type="entry name" value="EarA-like"/>
</dbReference>
<dbReference type="InterPro" id="IPR036388">
    <property type="entry name" value="WH-like_DNA-bd_sf"/>
</dbReference>
<dbReference type="InterPro" id="IPR036390">
    <property type="entry name" value="WH_DNA-bd_sf"/>
</dbReference>
<dbReference type="Pfam" id="PF07381">
    <property type="entry name" value="EarA"/>
    <property type="match status" value="1"/>
</dbReference>
<dbReference type="SUPFAM" id="SSF46785">
    <property type="entry name" value="Winged helix' DNA-binding domain"/>
    <property type="match status" value="1"/>
</dbReference>
<gene>
    <name type="ordered locus">MJ0905</name>
</gene>
<keyword id="KW-1185">Reference proteome</keyword>
<organism>
    <name type="scientific">Methanocaldococcus jannaschii (strain ATCC 43067 / DSM 2661 / JAL-1 / JCM 10045 / NBRC 100440)</name>
    <name type="common">Methanococcus jannaschii</name>
    <dbReference type="NCBI Taxonomy" id="243232"/>
    <lineage>
        <taxon>Archaea</taxon>
        <taxon>Methanobacteriati</taxon>
        <taxon>Methanobacteriota</taxon>
        <taxon>Methanomada group</taxon>
        <taxon>Methanococci</taxon>
        <taxon>Methanococcales</taxon>
        <taxon>Methanocaldococcaceae</taxon>
        <taxon>Methanocaldococcus</taxon>
    </lineage>
</organism>
<sequence length="111" mass="12873">MSLAFIDPMIIRSLNKSKLRKKILYLLYKMYPHGIYLSEISRRVRSDPSNVLGCLKGMNGRYNGHFSLIELGLVECVERGGVKIYKLTDYGKKIVEVLKDQDSDFIESLRW</sequence>
<feature type="chain" id="PRO_0000107097" description="Uncharacterized protein MJ0905">
    <location>
        <begin position="1"/>
        <end position="111"/>
    </location>
</feature>
<name>Y905_METJA</name>
<protein>
    <recommendedName>
        <fullName>Uncharacterized protein MJ0905</fullName>
    </recommendedName>
</protein>
<proteinExistence type="predicted"/>
<accession>Q58315</accession>
<reference key="1">
    <citation type="journal article" date="1996" name="Science">
        <title>Complete genome sequence of the methanogenic archaeon, Methanococcus jannaschii.</title>
        <authorList>
            <person name="Bult C.J."/>
            <person name="White O."/>
            <person name="Olsen G.J."/>
            <person name="Zhou L."/>
            <person name="Fleischmann R.D."/>
            <person name="Sutton G.G."/>
            <person name="Blake J.A."/>
            <person name="FitzGerald L.M."/>
            <person name="Clayton R.A."/>
            <person name="Gocayne J.D."/>
            <person name="Kerlavage A.R."/>
            <person name="Dougherty B.A."/>
            <person name="Tomb J.-F."/>
            <person name="Adams M.D."/>
            <person name="Reich C.I."/>
            <person name="Overbeek R."/>
            <person name="Kirkness E.F."/>
            <person name="Weinstock K.G."/>
            <person name="Merrick J.M."/>
            <person name="Glodek A."/>
            <person name="Scott J.L."/>
            <person name="Geoghagen N.S.M."/>
            <person name="Weidman J.F."/>
            <person name="Fuhrmann J.L."/>
            <person name="Nguyen D."/>
            <person name="Utterback T.R."/>
            <person name="Kelley J.M."/>
            <person name="Peterson J.D."/>
            <person name="Sadow P.W."/>
            <person name="Hanna M.C."/>
            <person name="Cotton M.D."/>
            <person name="Roberts K.M."/>
            <person name="Hurst M.A."/>
            <person name="Kaine B.P."/>
            <person name="Borodovsky M."/>
            <person name="Klenk H.-P."/>
            <person name="Fraser C.M."/>
            <person name="Smith H.O."/>
            <person name="Woese C.R."/>
            <person name="Venter J.C."/>
        </authorList>
    </citation>
    <scope>NUCLEOTIDE SEQUENCE [LARGE SCALE GENOMIC DNA]</scope>
    <source>
        <strain>ATCC 43067 / DSM 2661 / JAL-1 / JCM 10045 / NBRC 100440</strain>
    </source>
</reference>